<proteinExistence type="evidence at protein level"/>
<dbReference type="EMBL" id="CM002241">
    <property type="protein sequence ID" value="EAA31196.1"/>
    <property type="molecule type" value="Genomic_DNA"/>
</dbReference>
<dbReference type="RefSeq" id="XP_960432.1">
    <property type="nucleotide sequence ID" value="XM_955339.2"/>
</dbReference>
<dbReference type="PDB" id="6YW5">
    <property type="method" value="EM"/>
    <property type="resolution" value="2.85 A"/>
    <property type="chains" value="GG=1-309"/>
</dbReference>
<dbReference type="PDB" id="6YWX">
    <property type="method" value="EM"/>
    <property type="resolution" value="3.10 A"/>
    <property type="chains" value="GG=1-309"/>
</dbReference>
<dbReference type="PDBsum" id="6YW5"/>
<dbReference type="PDBsum" id="6YWX"/>
<dbReference type="EMDB" id="EMD-10958"/>
<dbReference type="EMDB" id="EMD-10978"/>
<dbReference type="SMR" id="Q7S6M9"/>
<dbReference type="FunCoup" id="Q7S6M9">
    <property type="interactions" value="227"/>
</dbReference>
<dbReference type="STRING" id="367110.Q7S6M9"/>
<dbReference type="PaxDb" id="5141-EFNCRP00000004452"/>
<dbReference type="EnsemblFungi" id="EAA31196">
    <property type="protein sequence ID" value="EAA31196"/>
    <property type="gene ID" value="NCU04806"/>
</dbReference>
<dbReference type="GeneID" id="3876570"/>
<dbReference type="KEGG" id="ncr:NCU04806"/>
<dbReference type="VEuPathDB" id="FungiDB:NCU04806"/>
<dbReference type="HOGENOM" id="CLU_049057_1_0_1"/>
<dbReference type="InParanoid" id="Q7S6M9"/>
<dbReference type="OMA" id="TAFKWIL"/>
<dbReference type="OrthoDB" id="9972728at2759"/>
<dbReference type="Proteomes" id="UP000001805">
    <property type="component" value="Chromosome 5, Linkage Group VI"/>
</dbReference>
<dbReference type="GO" id="GO:0005763">
    <property type="term" value="C:mitochondrial small ribosomal subunit"/>
    <property type="evidence" value="ECO:0000318"/>
    <property type="project" value="GO_Central"/>
</dbReference>
<dbReference type="GO" id="GO:0005840">
    <property type="term" value="C:ribosome"/>
    <property type="evidence" value="ECO:0000318"/>
    <property type="project" value="GO_Central"/>
</dbReference>
<dbReference type="GO" id="GO:0003729">
    <property type="term" value="F:mRNA binding"/>
    <property type="evidence" value="ECO:0000318"/>
    <property type="project" value="GO_Central"/>
</dbReference>
<dbReference type="GO" id="GO:0019843">
    <property type="term" value="F:rRNA binding"/>
    <property type="evidence" value="ECO:0000318"/>
    <property type="project" value="GO_Central"/>
</dbReference>
<dbReference type="GO" id="GO:0003735">
    <property type="term" value="F:structural constituent of ribosome"/>
    <property type="evidence" value="ECO:0000318"/>
    <property type="project" value="GO_Central"/>
</dbReference>
<dbReference type="GO" id="GO:0000028">
    <property type="term" value="P:ribosomal small subunit assembly"/>
    <property type="evidence" value="ECO:0000318"/>
    <property type="project" value="GO_Central"/>
</dbReference>
<dbReference type="GO" id="GO:0006412">
    <property type="term" value="P:translation"/>
    <property type="evidence" value="ECO:0000318"/>
    <property type="project" value="GO_Central"/>
</dbReference>
<dbReference type="CDD" id="cd14868">
    <property type="entry name" value="uS7_Mitochondria_Fungi"/>
    <property type="match status" value="1"/>
</dbReference>
<dbReference type="FunFam" id="1.10.455.10:FF:000006">
    <property type="entry name" value="37S ribosomal protein S7, mitochondrial"/>
    <property type="match status" value="1"/>
</dbReference>
<dbReference type="Gene3D" id="1.10.455.10">
    <property type="entry name" value="Ribosomal protein S7 domain"/>
    <property type="match status" value="1"/>
</dbReference>
<dbReference type="InterPro" id="IPR000235">
    <property type="entry name" value="Ribosomal_uS7"/>
</dbReference>
<dbReference type="InterPro" id="IPR023798">
    <property type="entry name" value="Ribosomal_uS7_dom"/>
</dbReference>
<dbReference type="InterPro" id="IPR036823">
    <property type="entry name" value="Ribosomal_uS7_dom_sf"/>
</dbReference>
<dbReference type="InterPro" id="IPR047988">
    <property type="entry name" value="Ribosomal_uS7m_fungi"/>
</dbReference>
<dbReference type="PANTHER" id="PTHR11205">
    <property type="entry name" value="RIBOSOMAL PROTEIN S7"/>
    <property type="match status" value="1"/>
</dbReference>
<dbReference type="Pfam" id="PF00177">
    <property type="entry name" value="Ribosomal_S7"/>
    <property type="match status" value="1"/>
</dbReference>
<dbReference type="SUPFAM" id="SSF47973">
    <property type="entry name" value="Ribosomal protein S7"/>
    <property type="match status" value="1"/>
</dbReference>
<protein>
    <recommendedName>
        <fullName evidence="3">Small ribosomal subunit protein uS7m</fullName>
    </recommendedName>
    <alternativeName>
        <fullName>Ribosomal protein S7 domain-containing protein</fullName>
    </alternativeName>
</protein>
<feature type="chain" id="PRO_0000458572" description="Small ribosomal subunit protein uS7m">
    <location>
        <begin position="1"/>
        <end position="309"/>
    </location>
</feature>
<feature type="region of interest" description="Disordered" evidence="1">
    <location>
        <begin position="39"/>
        <end position="86"/>
    </location>
</feature>
<feature type="compositionally biased region" description="Low complexity" evidence="1">
    <location>
        <begin position="51"/>
        <end position="61"/>
    </location>
</feature>
<gene>
    <name type="primary">rsm7</name>
    <name type="ORF">NCU04806</name>
</gene>
<accession>Q7S6M9</accession>
<name>RT07_NEUCR</name>
<sequence>MPARLGLSAAFRSLSIRTNQLPQQQSIAAAVQARTLITDSTTSSRLPPRVQIQQQQQQRTQPYSTETTPPPNSNNGDLAGIEGQPPVEVTPENAAALSQLSEIAYGVKAADVAIEGHKYGLPTLPLPSELHHKYRYSEVVNHATKLLMKDGKLSKAQRDMAMILNYLRSSPPPKLNPSRPLIPGHPPASHLPLNPVEYLTVAIDSVAPLIKMRGYKGLAGGGRSLEVPQPIPARQRRSTAFKWILDVVNKKPSKGSGRTMFAHRVAEEIVAVVEGRSSVWDKRMLIHKLGTANRANLNSPALQLKGKRF</sequence>
<keyword id="KW-0002">3D-structure</keyword>
<keyword id="KW-0496">Mitochondrion</keyword>
<keyword id="KW-1185">Reference proteome</keyword>
<keyword id="KW-0687">Ribonucleoprotein</keyword>
<keyword id="KW-0689">Ribosomal protein</keyword>
<evidence type="ECO:0000256" key="1">
    <source>
        <dbReference type="SAM" id="MobiDB-lite"/>
    </source>
</evidence>
<evidence type="ECO:0000269" key="2">
    <source>
    </source>
</evidence>
<evidence type="ECO:0000303" key="3">
    <source>
    </source>
</evidence>
<evidence type="ECO:0000305" key="4"/>
<evidence type="ECO:0000305" key="5">
    <source>
    </source>
</evidence>
<evidence type="ECO:0007744" key="6">
    <source>
        <dbReference type="PDB" id="6YW5"/>
    </source>
</evidence>
<evidence type="ECO:0007744" key="7">
    <source>
        <dbReference type="PDB" id="6YWX"/>
    </source>
</evidence>
<organism>
    <name type="scientific">Neurospora crassa (strain ATCC 24698 / 74-OR23-1A / CBS 708.71 / DSM 1257 / FGSC 987)</name>
    <dbReference type="NCBI Taxonomy" id="367110"/>
    <lineage>
        <taxon>Eukaryota</taxon>
        <taxon>Fungi</taxon>
        <taxon>Dikarya</taxon>
        <taxon>Ascomycota</taxon>
        <taxon>Pezizomycotina</taxon>
        <taxon>Sordariomycetes</taxon>
        <taxon>Sordariomycetidae</taxon>
        <taxon>Sordariales</taxon>
        <taxon>Sordariaceae</taxon>
        <taxon>Neurospora</taxon>
    </lineage>
</organism>
<reference key="1">
    <citation type="journal article" date="2003" name="Nature">
        <title>The genome sequence of the filamentous fungus Neurospora crassa.</title>
        <authorList>
            <person name="Galagan J.E."/>
            <person name="Calvo S.E."/>
            <person name="Borkovich K.A."/>
            <person name="Selker E.U."/>
            <person name="Read N.D."/>
            <person name="Jaffe D.B."/>
            <person name="FitzHugh W."/>
            <person name="Ma L.-J."/>
            <person name="Smirnov S."/>
            <person name="Purcell S."/>
            <person name="Rehman B."/>
            <person name="Elkins T."/>
            <person name="Engels R."/>
            <person name="Wang S."/>
            <person name="Nielsen C.B."/>
            <person name="Butler J."/>
            <person name="Endrizzi M."/>
            <person name="Qui D."/>
            <person name="Ianakiev P."/>
            <person name="Bell-Pedersen D."/>
            <person name="Nelson M.A."/>
            <person name="Werner-Washburne M."/>
            <person name="Selitrennikoff C.P."/>
            <person name="Kinsey J.A."/>
            <person name="Braun E.L."/>
            <person name="Zelter A."/>
            <person name="Schulte U."/>
            <person name="Kothe G.O."/>
            <person name="Jedd G."/>
            <person name="Mewes H.-W."/>
            <person name="Staben C."/>
            <person name="Marcotte E."/>
            <person name="Greenberg D."/>
            <person name="Roy A."/>
            <person name="Foley K."/>
            <person name="Naylor J."/>
            <person name="Stange-Thomann N."/>
            <person name="Barrett R."/>
            <person name="Gnerre S."/>
            <person name="Kamal M."/>
            <person name="Kamvysselis M."/>
            <person name="Mauceli E.W."/>
            <person name="Bielke C."/>
            <person name="Rudd S."/>
            <person name="Frishman D."/>
            <person name="Krystofova S."/>
            <person name="Rasmussen C."/>
            <person name="Metzenberg R.L."/>
            <person name="Perkins D.D."/>
            <person name="Kroken S."/>
            <person name="Cogoni C."/>
            <person name="Macino G."/>
            <person name="Catcheside D.E.A."/>
            <person name="Li W."/>
            <person name="Pratt R.J."/>
            <person name="Osmani S.A."/>
            <person name="DeSouza C.P.C."/>
            <person name="Glass N.L."/>
            <person name="Orbach M.J."/>
            <person name="Berglund J.A."/>
            <person name="Voelker R."/>
            <person name="Yarden O."/>
            <person name="Plamann M."/>
            <person name="Seiler S."/>
            <person name="Dunlap J.C."/>
            <person name="Radford A."/>
            <person name="Aramayo R."/>
            <person name="Natvig D.O."/>
            <person name="Alex L.A."/>
            <person name="Mannhaupt G."/>
            <person name="Ebbole D.J."/>
            <person name="Freitag M."/>
            <person name="Paulsen I."/>
            <person name="Sachs M.S."/>
            <person name="Lander E.S."/>
            <person name="Nusbaum C."/>
            <person name="Birren B.W."/>
        </authorList>
    </citation>
    <scope>NUCLEOTIDE SEQUENCE [LARGE SCALE GENOMIC DNA]</scope>
    <source>
        <strain>ATCC 24698 / 74-OR23-1A / CBS 708.71 / DSM 1257 / FGSC 987</strain>
    </source>
</reference>
<reference evidence="6 7" key="2">
    <citation type="journal article" date="2020" name="Nat. Commun.">
        <title>Analysis of translating mitoribosome reveals functional characteristics of translation in mitochondria of fungi.</title>
        <authorList>
            <person name="Itoh Y."/>
            <person name="Naschberger A."/>
            <person name="Mortezaei N."/>
            <person name="Herrmann J.M."/>
            <person name="Amunts A."/>
        </authorList>
    </citation>
    <scope>STRUCTURE BY ELECTRON MICROSCOPY (2.85 ANGSTROMS)</scope>
</reference>
<comment type="function">
    <text evidence="5">Component of the mitochondrial ribosome (mitoribosome), a dedicated translation machinery responsible for the synthesis of mitochondrial genome-encoded proteins, including at least some of the essential transmembrane subunits of the mitochondrial respiratory chain. The mitoribosomes are attached to the mitochondrial inner membrane and translation products are cotranslationally integrated into the membrane.</text>
</comment>
<comment type="subunit">
    <text evidence="2">Component of the mitochondrial small ribosomal subunit (mt-SSU). Mature N.crassa 74S mitochondrial ribosomes consist of a small (37S) and a large (54S) subunit. The 37S small subunit contains a 16S ribosomal RNA (16S mt-rRNA) and 32 different proteins. The 54S large subunit contains a 23S rRNA (23S mt-rRNA) and 42 different proteins.</text>
</comment>
<comment type="subcellular location">
    <subcellularLocation>
        <location evidence="2">Mitochondrion</location>
    </subcellularLocation>
</comment>
<comment type="similarity">
    <text evidence="4">Belongs to the universal ribosomal protein uS7 family.</text>
</comment>